<sequence length="257" mass="27597">MMSNDIFPNKFKAALAAQRIQIGCWSALANPISTEVLGLAGFDWLVLDGEHAPNDISTFIPQLMALKGSASAPVVRVPTNEPVIIKRLLDIGFYNFLIPFVETEEEAVRAVASTRYPPEGIRGVSVSHRANMFGTVPDYFAQSNKNITILVQIESQQGVDNVDAIAATEGVDGIFVGPSDLAAALGHLGNASHPEVQKTIQHIFARAKAHGKPCGILAPVEADARRYLEWGATFVAVGSDLGVFRSATQKLADAFKK</sequence>
<protein>
    <recommendedName>
        <fullName evidence="1">5-keto-4-deoxy-D-glucarate aldolase</fullName>
        <shortName evidence="1">KDGluc aldolase</shortName>
        <shortName evidence="1">KDGlucA</shortName>
        <ecNumber evidence="1">4.1.2.20</ecNumber>
    </recommendedName>
    <alternativeName>
        <fullName evidence="1">2-dehydro-3-deoxy-D-glucarate aldolase</fullName>
    </alternativeName>
    <alternativeName>
        <fullName evidence="1">2-keto-3-deoxy-D-glucarate aldolase</fullName>
    </alternativeName>
    <alternativeName>
        <fullName evidence="1">5-dehydro-4-deoxy-D-glucarate aldolase</fullName>
    </alternativeName>
    <alternativeName>
        <fullName evidence="1">Alpha-keto-beta-deoxy-D-glucarate aldolase</fullName>
    </alternativeName>
</protein>
<reference key="1">
    <citation type="submission" date="2007-08" db="EMBL/GenBank/DDBJ databases">
        <authorList>
            <consortium name="The Citrobacter koseri Genome Sequencing Project"/>
            <person name="McClelland M."/>
            <person name="Sanderson E.K."/>
            <person name="Porwollik S."/>
            <person name="Spieth J."/>
            <person name="Clifton W.S."/>
            <person name="Latreille P."/>
            <person name="Courtney L."/>
            <person name="Wang C."/>
            <person name="Pepin K."/>
            <person name="Bhonagiri V."/>
            <person name="Nash W."/>
            <person name="Johnson M."/>
            <person name="Thiruvilangam P."/>
            <person name="Wilson R."/>
        </authorList>
    </citation>
    <scope>NUCLEOTIDE SEQUENCE [LARGE SCALE GENOMIC DNA]</scope>
    <source>
        <strain>ATCC BAA-895 / CDC 4225-83 / SGSC4696</strain>
    </source>
</reference>
<dbReference type="EC" id="4.1.2.20" evidence="1"/>
<dbReference type="EMBL" id="CP000822">
    <property type="protein sequence ID" value="ABV15577.1"/>
    <property type="molecule type" value="Genomic_DNA"/>
</dbReference>
<dbReference type="SMR" id="A8AQ14"/>
<dbReference type="STRING" id="290338.CKO_04523"/>
<dbReference type="KEGG" id="cko:CKO_04523"/>
<dbReference type="HOGENOM" id="CLU_059964_1_0_6"/>
<dbReference type="UniPathway" id="UPA00565">
    <property type="reaction ID" value="UER00630"/>
</dbReference>
<dbReference type="Proteomes" id="UP000008148">
    <property type="component" value="Chromosome"/>
</dbReference>
<dbReference type="GO" id="GO:0005737">
    <property type="term" value="C:cytoplasm"/>
    <property type="evidence" value="ECO:0007669"/>
    <property type="project" value="TreeGrafter"/>
</dbReference>
<dbReference type="GO" id="GO:0008672">
    <property type="term" value="F:2-dehydro-3-deoxyglucarate aldolase activity"/>
    <property type="evidence" value="ECO:0007669"/>
    <property type="project" value="UniProtKB-UniRule"/>
</dbReference>
<dbReference type="GO" id="GO:0000287">
    <property type="term" value="F:magnesium ion binding"/>
    <property type="evidence" value="ECO:0007669"/>
    <property type="project" value="UniProtKB-UniRule"/>
</dbReference>
<dbReference type="GO" id="GO:0042838">
    <property type="term" value="P:D-glucarate catabolic process"/>
    <property type="evidence" value="ECO:0007669"/>
    <property type="project" value="UniProtKB-UniRule"/>
</dbReference>
<dbReference type="GO" id="GO:0046392">
    <property type="term" value="P:galactarate catabolic process"/>
    <property type="evidence" value="ECO:0007669"/>
    <property type="project" value="UniProtKB-UniRule"/>
</dbReference>
<dbReference type="FunFam" id="3.20.20.60:FF:000004">
    <property type="entry name" value="5-keto-4-deoxy-D-glucarate aldolase"/>
    <property type="match status" value="1"/>
</dbReference>
<dbReference type="Gene3D" id="3.20.20.60">
    <property type="entry name" value="Phosphoenolpyruvate-binding domains"/>
    <property type="match status" value="1"/>
</dbReference>
<dbReference type="HAMAP" id="MF_01291">
    <property type="entry name" value="KDGluc_aldolase"/>
    <property type="match status" value="1"/>
</dbReference>
<dbReference type="InterPro" id="IPR005000">
    <property type="entry name" value="Aldolase/citrate-lyase_domain"/>
</dbReference>
<dbReference type="InterPro" id="IPR017648">
    <property type="entry name" value="GarL"/>
</dbReference>
<dbReference type="InterPro" id="IPR050251">
    <property type="entry name" value="HpcH-HpaI_aldolase"/>
</dbReference>
<dbReference type="InterPro" id="IPR015813">
    <property type="entry name" value="Pyrv/PenolPyrv_kinase-like_dom"/>
</dbReference>
<dbReference type="InterPro" id="IPR040442">
    <property type="entry name" value="Pyrv_kinase-like_dom_sf"/>
</dbReference>
<dbReference type="NCBIfam" id="TIGR03239">
    <property type="entry name" value="GarL"/>
    <property type="match status" value="1"/>
</dbReference>
<dbReference type="NCBIfam" id="NF007849">
    <property type="entry name" value="PRK10558.1"/>
    <property type="match status" value="1"/>
</dbReference>
<dbReference type="PANTHER" id="PTHR30502">
    <property type="entry name" value="2-KETO-3-DEOXY-L-RHAMNONATE ALDOLASE"/>
    <property type="match status" value="1"/>
</dbReference>
<dbReference type="PANTHER" id="PTHR30502:SF4">
    <property type="entry name" value="5-KETO-4-DEOXY-D-GLUCARATE ALDOLASE"/>
    <property type="match status" value="1"/>
</dbReference>
<dbReference type="Pfam" id="PF03328">
    <property type="entry name" value="HpcH_HpaI"/>
    <property type="match status" value="1"/>
</dbReference>
<dbReference type="SUPFAM" id="SSF51621">
    <property type="entry name" value="Phosphoenolpyruvate/pyruvate domain"/>
    <property type="match status" value="1"/>
</dbReference>
<feature type="chain" id="PRO_0000353140" description="5-keto-4-deoxy-D-glucarate aldolase">
    <location>
        <begin position="1"/>
        <end position="257"/>
    </location>
</feature>
<feature type="active site" description="Proton acceptor" evidence="1">
    <location>
        <position position="51"/>
    </location>
</feature>
<feature type="binding site" evidence="1">
    <location>
        <position position="152"/>
    </location>
    <ligand>
        <name>substrate</name>
    </ligand>
</feature>
<feature type="binding site" evidence="1">
    <location>
        <position position="154"/>
    </location>
    <ligand>
        <name>Mg(2+)</name>
        <dbReference type="ChEBI" id="CHEBI:18420"/>
    </ligand>
</feature>
<feature type="binding site" evidence="1">
    <location>
        <position position="179"/>
    </location>
    <ligand>
        <name>substrate</name>
    </ligand>
</feature>
<feature type="binding site" evidence="1">
    <location>
        <position position="180"/>
    </location>
    <ligand>
        <name>Mg(2+)</name>
        <dbReference type="ChEBI" id="CHEBI:18420"/>
    </ligand>
</feature>
<feature type="binding site" evidence="1">
    <location>
        <position position="180"/>
    </location>
    <ligand>
        <name>substrate</name>
    </ligand>
</feature>
<feature type="site" description="Transition state stabilizer" evidence="1">
    <location>
        <position position="76"/>
    </location>
</feature>
<feature type="site" description="Increases basicity of active site His" evidence="1">
    <location>
        <position position="90"/>
    </location>
</feature>
<name>GARL_CITK8</name>
<comment type="function">
    <text evidence="1">Catalyzes the reversible retro-aldol cleavage of both 5-keto-4-deoxy-D-glucarate and 2-keto-3-deoxy-D-glucarate to pyruvate and tartronic semialdehyde.</text>
</comment>
<comment type="catalytic activity">
    <reaction evidence="1">
        <text>5-dehydro-4-deoxy-D-glucarate = 2-hydroxy-3-oxopropanoate + pyruvate</text>
        <dbReference type="Rhea" id="RHEA:27726"/>
        <dbReference type="ChEBI" id="CHEBI:15361"/>
        <dbReference type="ChEBI" id="CHEBI:42819"/>
        <dbReference type="ChEBI" id="CHEBI:57978"/>
    </reaction>
</comment>
<comment type="catalytic activity">
    <reaction evidence="1">
        <text>2-dehydro-3-deoxy-D-glucarate = 2-hydroxy-3-oxopropanoate + pyruvate</text>
        <dbReference type="Rhea" id="RHEA:10268"/>
        <dbReference type="ChEBI" id="CHEBI:15361"/>
        <dbReference type="ChEBI" id="CHEBI:57978"/>
        <dbReference type="ChEBI" id="CHEBI:58098"/>
        <dbReference type="EC" id="4.1.2.20"/>
    </reaction>
</comment>
<comment type="cofactor">
    <cofactor evidence="1">
        <name>Mg(2+)</name>
        <dbReference type="ChEBI" id="CHEBI:18420"/>
    </cofactor>
    <text evidence="1">Binds 1 Mg(2+) ion per subunit.</text>
</comment>
<comment type="pathway">
    <text evidence="1">Carbohydrate acid metabolism; galactarate degradation; D-glycerate from galactarate: step 2/3.</text>
</comment>
<comment type="subunit">
    <text evidence="1">Homohexamer; trimer of dimers.</text>
</comment>
<comment type="similarity">
    <text evidence="1">Belongs to the HpcH/HpaI aldolase family. KDGluc aldolase subfamily.</text>
</comment>
<evidence type="ECO:0000255" key="1">
    <source>
        <dbReference type="HAMAP-Rule" id="MF_01291"/>
    </source>
</evidence>
<keyword id="KW-0456">Lyase</keyword>
<keyword id="KW-0460">Magnesium</keyword>
<keyword id="KW-0479">Metal-binding</keyword>
<keyword id="KW-1185">Reference proteome</keyword>
<organism>
    <name type="scientific">Citrobacter koseri (strain ATCC BAA-895 / CDC 4225-83 / SGSC4696)</name>
    <dbReference type="NCBI Taxonomy" id="290338"/>
    <lineage>
        <taxon>Bacteria</taxon>
        <taxon>Pseudomonadati</taxon>
        <taxon>Pseudomonadota</taxon>
        <taxon>Gammaproteobacteria</taxon>
        <taxon>Enterobacterales</taxon>
        <taxon>Enterobacteriaceae</taxon>
        <taxon>Citrobacter</taxon>
    </lineage>
</organism>
<accession>A8AQ14</accession>
<gene>
    <name evidence="1" type="primary">garL</name>
    <name type="ordered locus">CKO_04523</name>
</gene>
<proteinExistence type="inferred from homology"/>